<accession>Q99LY9</accession>
<accession>Q3U734</accession>
<sequence length="106" mass="12648">MPFLDIQKKLGISLDRHFMFLSAEQPYKNAARCHAFEKEWIECAHGIGGTRAKKECKIEFDDFEECLLRYKTMRRMHDIKKQREKLMKEGKYTPPPHHSGREEPRP</sequence>
<comment type="function">
    <text evidence="4">Accessory subunit of the mitochondrial membrane respiratory chain NADH dehydrogenase (Complex I), that is believed not to be involved in catalysis. Complex I functions in the transfer of electrons from NADH to the respiratory chain. The immediate electron acceptor for the enzyme is believed to be ubiquinone.</text>
</comment>
<comment type="subunit">
    <text evidence="4">Mammalian complex I is composed of 45 different subunits. This is a component of the iron-sulfur (IP) fragment of the enzyme.</text>
</comment>
<comment type="subcellular location">
    <subcellularLocation>
        <location evidence="4">Mitochondrion inner membrane</location>
        <topology evidence="4">Peripheral membrane protein</topology>
    </subcellularLocation>
    <subcellularLocation>
        <location evidence="4">Mitochondrion intermembrane space</location>
    </subcellularLocation>
</comment>
<comment type="domain">
    <text evidence="1">Contains two C-X9-C motifs that are predicted to form a helix-coil-helix structure, permitting the formation of intramolecular disulfide bonds.</text>
</comment>
<comment type="similarity">
    <text evidence="5">Belongs to the complex I NDUFS5 subunit family.</text>
</comment>
<reference key="1">
    <citation type="journal article" date="2005" name="Science">
        <title>The transcriptional landscape of the mammalian genome.</title>
        <authorList>
            <person name="Carninci P."/>
            <person name="Kasukawa T."/>
            <person name="Katayama S."/>
            <person name="Gough J."/>
            <person name="Frith M.C."/>
            <person name="Maeda N."/>
            <person name="Oyama R."/>
            <person name="Ravasi T."/>
            <person name="Lenhard B."/>
            <person name="Wells C."/>
            <person name="Kodzius R."/>
            <person name="Shimokawa K."/>
            <person name="Bajic V.B."/>
            <person name="Brenner S.E."/>
            <person name="Batalov S."/>
            <person name="Forrest A.R."/>
            <person name="Zavolan M."/>
            <person name="Davis M.J."/>
            <person name="Wilming L.G."/>
            <person name="Aidinis V."/>
            <person name="Allen J.E."/>
            <person name="Ambesi-Impiombato A."/>
            <person name="Apweiler R."/>
            <person name="Aturaliya R.N."/>
            <person name="Bailey T.L."/>
            <person name="Bansal M."/>
            <person name="Baxter L."/>
            <person name="Beisel K.W."/>
            <person name="Bersano T."/>
            <person name="Bono H."/>
            <person name="Chalk A.M."/>
            <person name="Chiu K.P."/>
            <person name="Choudhary V."/>
            <person name="Christoffels A."/>
            <person name="Clutterbuck D.R."/>
            <person name="Crowe M.L."/>
            <person name="Dalla E."/>
            <person name="Dalrymple B.P."/>
            <person name="de Bono B."/>
            <person name="Della Gatta G."/>
            <person name="di Bernardo D."/>
            <person name="Down T."/>
            <person name="Engstrom P."/>
            <person name="Fagiolini M."/>
            <person name="Faulkner G."/>
            <person name="Fletcher C.F."/>
            <person name="Fukushima T."/>
            <person name="Furuno M."/>
            <person name="Futaki S."/>
            <person name="Gariboldi M."/>
            <person name="Georgii-Hemming P."/>
            <person name="Gingeras T.R."/>
            <person name="Gojobori T."/>
            <person name="Green R.E."/>
            <person name="Gustincich S."/>
            <person name="Harbers M."/>
            <person name="Hayashi Y."/>
            <person name="Hensch T.K."/>
            <person name="Hirokawa N."/>
            <person name="Hill D."/>
            <person name="Huminiecki L."/>
            <person name="Iacono M."/>
            <person name="Ikeo K."/>
            <person name="Iwama A."/>
            <person name="Ishikawa T."/>
            <person name="Jakt M."/>
            <person name="Kanapin A."/>
            <person name="Katoh M."/>
            <person name="Kawasawa Y."/>
            <person name="Kelso J."/>
            <person name="Kitamura H."/>
            <person name="Kitano H."/>
            <person name="Kollias G."/>
            <person name="Krishnan S.P."/>
            <person name="Kruger A."/>
            <person name="Kummerfeld S.K."/>
            <person name="Kurochkin I.V."/>
            <person name="Lareau L.F."/>
            <person name="Lazarevic D."/>
            <person name="Lipovich L."/>
            <person name="Liu J."/>
            <person name="Liuni S."/>
            <person name="McWilliam S."/>
            <person name="Madan Babu M."/>
            <person name="Madera M."/>
            <person name="Marchionni L."/>
            <person name="Matsuda H."/>
            <person name="Matsuzawa S."/>
            <person name="Miki H."/>
            <person name="Mignone F."/>
            <person name="Miyake S."/>
            <person name="Morris K."/>
            <person name="Mottagui-Tabar S."/>
            <person name="Mulder N."/>
            <person name="Nakano N."/>
            <person name="Nakauchi H."/>
            <person name="Ng P."/>
            <person name="Nilsson R."/>
            <person name="Nishiguchi S."/>
            <person name="Nishikawa S."/>
            <person name="Nori F."/>
            <person name="Ohara O."/>
            <person name="Okazaki Y."/>
            <person name="Orlando V."/>
            <person name="Pang K.C."/>
            <person name="Pavan W.J."/>
            <person name="Pavesi G."/>
            <person name="Pesole G."/>
            <person name="Petrovsky N."/>
            <person name="Piazza S."/>
            <person name="Reed J."/>
            <person name="Reid J.F."/>
            <person name="Ring B.Z."/>
            <person name="Ringwald M."/>
            <person name="Rost B."/>
            <person name="Ruan Y."/>
            <person name="Salzberg S.L."/>
            <person name="Sandelin A."/>
            <person name="Schneider C."/>
            <person name="Schoenbach C."/>
            <person name="Sekiguchi K."/>
            <person name="Semple C.A."/>
            <person name="Seno S."/>
            <person name="Sessa L."/>
            <person name="Sheng Y."/>
            <person name="Shibata Y."/>
            <person name="Shimada H."/>
            <person name="Shimada K."/>
            <person name="Silva D."/>
            <person name="Sinclair B."/>
            <person name="Sperling S."/>
            <person name="Stupka E."/>
            <person name="Sugiura K."/>
            <person name="Sultana R."/>
            <person name="Takenaka Y."/>
            <person name="Taki K."/>
            <person name="Tammoja K."/>
            <person name="Tan S.L."/>
            <person name="Tang S."/>
            <person name="Taylor M.S."/>
            <person name="Tegner J."/>
            <person name="Teichmann S.A."/>
            <person name="Ueda H.R."/>
            <person name="van Nimwegen E."/>
            <person name="Verardo R."/>
            <person name="Wei C.L."/>
            <person name="Yagi K."/>
            <person name="Yamanishi H."/>
            <person name="Zabarovsky E."/>
            <person name="Zhu S."/>
            <person name="Zimmer A."/>
            <person name="Hide W."/>
            <person name="Bult C."/>
            <person name="Grimmond S.M."/>
            <person name="Teasdale R.D."/>
            <person name="Liu E.T."/>
            <person name="Brusic V."/>
            <person name="Quackenbush J."/>
            <person name="Wahlestedt C."/>
            <person name="Mattick J.S."/>
            <person name="Hume D.A."/>
            <person name="Kai C."/>
            <person name="Sasaki D."/>
            <person name="Tomaru Y."/>
            <person name="Fukuda S."/>
            <person name="Kanamori-Katayama M."/>
            <person name="Suzuki M."/>
            <person name="Aoki J."/>
            <person name="Arakawa T."/>
            <person name="Iida J."/>
            <person name="Imamura K."/>
            <person name="Itoh M."/>
            <person name="Kato T."/>
            <person name="Kawaji H."/>
            <person name="Kawagashira N."/>
            <person name="Kawashima T."/>
            <person name="Kojima M."/>
            <person name="Kondo S."/>
            <person name="Konno H."/>
            <person name="Nakano K."/>
            <person name="Ninomiya N."/>
            <person name="Nishio T."/>
            <person name="Okada M."/>
            <person name="Plessy C."/>
            <person name="Shibata K."/>
            <person name="Shiraki T."/>
            <person name="Suzuki S."/>
            <person name="Tagami M."/>
            <person name="Waki K."/>
            <person name="Watahiki A."/>
            <person name="Okamura-Oho Y."/>
            <person name="Suzuki H."/>
            <person name="Kawai J."/>
            <person name="Hayashizaki Y."/>
        </authorList>
    </citation>
    <scope>NUCLEOTIDE SEQUENCE [LARGE SCALE MRNA]</scope>
    <source>
        <strain>C57BL/6J</strain>
        <tissue>Bone marrow</tissue>
        <tissue>Pancreas</tissue>
    </source>
</reference>
<reference key="2">
    <citation type="journal article" date="2009" name="PLoS Biol.">
        <title>Lineage-specific biology revealed by a finished genome assembly of the mouse.</title>
        <authorList>
            <person name="Church D.M."/>
            <person name="Goodstadt L."/>
            <person name="Hillier L.W."/>
            <person name="Zody M.C."/>
            <person name="Goldstein S."/>
            <person name="She X."/>
            <person name="Bult C.J."/>
            <person name="Agarwala R."/>
            <person name="Cherry J.L."/>
            <person name="DiCuccio M."/>
            <person name="Hlavina W."/>
            <person name="Kapustin Y."/>
            <person name="Meric P."/>
            <person name="Maglott D."/>
            <person name="Birtle Z."/>
            <person name="Marques A.C."/>
            <person name="Graves T."/>
            <person name="Zhou S."/>
            <person name="Teague B."/>
            <person name="Potamousis K."/>
            <person name="Churas C."/>
            <person name="Place M."/>
            <person name="Herschleb J."/>
            <person name="Runnheim R."/>
            <person name="Forrest D."/>
            <person name="Amos-Landgraf J."/>
            <person name="Schwartz D.C."/>
            <person name="Cheng Z."/>
            <person name="Lindblad-Toh K."/>
            <person name="Eichler E.E."/>
            <person name="Ponting C.P."/>
        </authorList>
    </citation>
    <scope>NUCLEOTIDE SEQUENCE [LARGE SCALE GENOMIC DNA]</scope>
    <source>
        <strain>C57BL/6J</strain>
    </source>
</reference>
<reference key="3">
    <citation type="submission" date="2005-09" db="EMBL/GenBank/DDBJ databases">
        <authorList>
            <person name="Mural R.J."/>
            <person name="Adams M.D."/>
            <person name="Myers E.W."/>
            <person name="Smith H.O."/>
            <person name="Venter J.C."/>
        </authorList>
    </citation>
    <scope>NUCLEOTIDE SEQUENCE [LARGE SCALE GENOMIC DNA]</scope>
</reference>
<reference key="4">
    <citation type="journal article" date="2004" name="Genome Res.">
        <title>The status, quality, and expansion of the NIH full-length cDNA project: the Mammalian Gene Collection (MGC).</title>
        <authorList>
            <consortium name="The MGC Project Team"/>
        </authorList>
    </citation>
    <scope>NUCLEOTIDE SEQUENCE [LARGE SCALE MRNA]</scope>
    <source>
        <strain>C57BL/6J</strain>
        <tissue>Brain</tissue>
    </source>
</reference>
<reference key="5">
    <citation type="submission" date="2007-04" db="UniProtKB">
        <authorList>
            <person name="Lubec G."/>
            <person name="Kang S.U."/>
        </authorList>
    </citation>
    <scope>PROTEIN SEQUENCE OF 1-7; 16-27 AND 57-68</scope>
    <scope>IDENTIFICATION BY MASS SPECTROMETRY</scope>
    <source>
        <strain>C57BL/6J</strain>
        <tissue>Brain</tissue>
    </source>
</reference>
<reference key="6">
    <citation type="journal article" date="2010" name="Cell">
        <title>A tissue-specific atlas of mouse protein phosphorylation and expression.</title>
        <authorList>
            <person name="Huttlin E.L."/>
            <person name="Jedrychowski M.P."/>
            <person name="Elias J.E."/>
            <person name="Goswami T."/>
            <person name="Rad R."/>
            <person name="Beausoleil S.A."/>
            <person name="Villen J."/>
            <person name="Haas W."/>
            <person name="Sowa M.E."/>
            <person name="Gygi S.P."/>
        </authorList>
    </citation>
    <scope>IDENTIFICATION BY MASS SPECTROMETRY [LARGE SCALE ANALYSIS]</scope>
    <source>
        <tissue>Brain</tissue>
        <tissue>Brown adipose tissue</tissue>
        <tissue>Heart</tissue>
        <tissue>Kidney</tissue>
        <tissue>Liver</tissue>
        <tissue>Lung</tissue>
        <tissue>Pancreas</tissue>
        <tissue>Spleen</tissue>
        <tissue>Testis</tissue>
    </source>
</reference>
<reference evidence="6" key="7">
    <citation type="journal article" date="2024" name="Nat. Struct. Mol. Biol.">
        <title>SCAF1 drives the compositional diversity of mammalian respirasomes.</title>
        <authorList>
            <person name="Vercellino I."/>
            <person name="Sazanov L.A."/>
        </authorList>
    </citation>
    <scope>STRUCTURE BY ELECTRON MICROSCOPY (3.60 ANGSTROMS) IN COMPLEX WITH MITOCHONDRIAL RESPIRATORY SUPERCOMPLEX</scope>
    <scope>FUNCTION</scope>
    <scope>SUBCELLULAR LOCATION</scope>
    <scope>SUBUNIT</scope>
</reference>
<keyword id="KW-0002">3D-structure</keyword>
<keyword id="KW-0903">Direct protein sequencing</keyword>
<keyword id="KW-1015">Disulfide bond</keyword>
<keyword id="KW-0249">Electron transport</keyword>
<keyword id="KW-0472">Membrane</keyword>
<keyword id="KW-0496">Mitochondrion</keyword>
<keyword id="KW-0999">Mitochondrion inner membrane</keyword>
<keyword id="KW-1185">Reference proteome</keyword>
<keyword id="KW-0679">Respiratory chain</keyword>
<keyword id="KW-0813">Transport</keyword>
<name>NDUS5_MOUSE</name>
<protein>
    <recommendedName>
        <fullName>NADH dehydrogenase [ubiquinone] iron-sulfur protein 5</fullName>
    </recommendedName>
    <alternativeName>
        <fullName>Complex I-15 kDa</fullName>
        <shortName>CI-15 kDa</shortName>
    </alternativeName>
    <alternativeName>
        <fullName>NADH-ubiquinone oxidoreductase 15 kDa subunit</fullName>
    </alternativeName>
</protein>
<proteinExistence type="evidence at protein level"/>
<organism>
    <name type="scientific">Mus musculus</name>
    <name type="common">Mouse</name>
    <dbReference type="NCBI Taxonomy" id="10090"/>
    <lineage>
        <taxon>Eukaryota</taxon>
        <taxon>Metazoa</taxon>
        <taxon>Chordata</taxon>
        <taxon>Craniata</taxon>
        <taxon>Vertebrata</taxon>
        <taxon>Euteleostomi</taxon>
        <taxon>Mammalia</taxon>
        <taxon>Eutheria</taxon>
        <taxon>Euarchontoglires</taxon>
        <taxon>Glires</taxon>
        <taxon>Rodentia</taxon>
        <taxon>Myomorpha</taxon>
        <taxon>Muroidea</taxon>
        <taxon>Muridae</taxon>
        <taxon>Murinae</taxon>
        <taxon>Mus</taxon>
        <taxon>Mus</taxon>
    </lineage>
</organism>
<gene>
    <name type="primary">Ndufs5</name>
</gene>
<dbReference type="EMBL" id="AK148505">
    <property type="protein sequence ID" value="BAE28590.1"/>
    <property type="molecule type" value="mRNA"/>
</dbReference>
<dbReference type="EMBL" id="AK152845">
    <property type="protein sequence ID" value="BAE31538.1"/>
    <property type="molecule type" value="mRNA"/>
</dbReference>
<dbReference type="EMBL" id="AL606932">
    <property type="status" value="NOT_ANNOTATED_CDS"/>
    <property type="molecule type" value="Genomic_DNA"/>
</dbReference>
<dbReference type="EMBL" id="CH466521">
    <property type="protein sequence ID" value="EDK98017.1"/>
    <property type="molecule type" value="Genomic_DNA"/>
</dbReference>
<dbReference type="EMBL" id="CH466552">
    <property type="protein sequence ID" value="EDL30376.1"/>
    <property type="molecule type" value="Genomic_DNA"/>
</dbReference>
<dbReference type="EMBL" id="BC081434">
    <property type="protein sequence ID" value="AAH81434.1"/>
    <property type="molecule type" value="mRNA"/>
</dbReference>
<dbReference type="CCDS" id="CCDS18618.1"/>
<dbReference type="RefSeq" id="NP_001025445.1">
    <property type="nucleotide sequence ID" value="NM_001030274.1"/>
</dbReference>
<dbReference type="PDB" id="6G2J">
    <property type="method" value="EM"/>
    <property type="resolution" value="3.30 A"/>
    <property type="chains" value="e=1-106"/>
</dbReference>
<dbReference type="PDB" id="6G72">
    <property type="method" value="EM"/>
    <property type="resolution" value="3.90 A"/>
    <property type="chains" value="e=1-106"/>
</dbReference>
<dbReference type="PDB" id="6ZR2">
    <property type="method" value="EM"/>
    <property type="resolution" value="3.10 A"/>
    <property type="chains" value="e=1-106"/>
</dbReference>
<dbReference type="PDB" id="6ZTQ">
    <property type="method" value="EM"/>
    <property type="resolution" value="3.00 A"/>
    <property type="chains" value="e=1-106"/>
</dbReference>
<dbReference type="PDB" id="7AK5">
    <property type="method" value="EM"/>
    <property type="resolution" value="3.17 A"/>
    <property type="chains" value="e=1-106"/>
</dbReference>
<dbReference type="PDB" id="7AK6">
    <property type="method" value="EM"/>
    <property type="resolution" value="3.82 A"/>
    <property type="chains" value="e=1-106"/>
</dbReference>
<dbReference type="PDB" id="7B93">
    <property type="method" value="EM"/>
    <property type="resolution" value="3.04 A"/>
    <property type="chains" value="e=1-106"/>
</dbReference>
<dbReference type="PDB" id="7PSA">
    <property type="method" value="EM"/>
    <property type="resolution" value="3.40 A"/>
    <property type="chains" value="e=1-106"/>
</dbReference>
<dbReference type="PDB" id="8C2S">
    <property type="method" value="EM"/>
    <property type="resolution" value="3.90 A"/>
    <property type="chains" value="e=1-106"/>
</dbReference>
<dbReference type="PDB" id="8CA3">
    <property type="method" value="EM"/>
    <property type="resolution" value="3.20 A"/>
    <property type="chains" value="e=1-106"/>
</dbReference>
<dbReference type="PDB" id="8CA5">
    <property type="method" value="EM"/>
    <property type="resolution" value="3.90 A"/>
    <property type="chains" value="e=1-106"/>
</dbReference>
<dbReference type="PDB" id="8IAO">
    <property type="method" value="EM"/>
    <property type="resolution" value="4.20 A"/>
    <property type="chains" value="e=1-106"/>
</dbReference>
<dbReference type="PDB" id="8IAQ">
    <property type="method" value="EM"/>
    <property type="resolution" value="3.40 A"/>
    <property type="chains" value="e=1-106"/>
</dbReference>
<dbReference type="PDB" id="8IB4">
    <property type="method" value="EM"/>
    <property type="resolution" value="4.30 A"/>
    <property type="chains" value="e=1-106"/>
</dbReference>
<dbReference type="PDB" id="8IB6">
    <property type="method" value="EM"/>
    <property type="resolution" value="3.30 A"/>
    <property type="chains" value="e=1-106"/>
</dbReference>
<dbReference type="PDB" id="8IB9">
    <property type="method" value="EM"/>
    <property type="resolution" value="4.30 A"/>
    <property type="chains" value="e=1-106"/>
</dbReference>
<dbReference type="PDB" id="8IBB">
    <property type="method" value="EM"/>
    <property type="resolution" value="3.30 A"/>
    <property type="chains" value="e=1-106"/>
</dbReference>
<dbReference type="PDB" id="8IBD">
    <property type="method" value="EM"/>
    <property type="resolution" value="4.20 A"/>
    <property type="chains" value="e=1-106"/>
</dbReference>
<dbReference type="PDB" id="8IBF">
    <property type="method" value="EM"/>
    <property type="resolution" value="3.30 A"/>
    <property type="chains" value="e=1-106"/>
</dbReference>
<dbReference type="PDB" id="8IC2">
    <property type="method" value="EM"/>
    <property type="resolution" value="6.30 A"/>
    <property type="chains" value="e=1-106"/>
</dbReference>
<dbReference type="PDB" id="8IC4">
    <property type="method" value="EM"/>
    <property type="resolution" value="3.20 A"/>
    <property type="chains" value="e=1-106"/>
</dbReference>
<dbReference type="PDB" id="8OLT">
    <property type="method" value="EM"/>
    <property type="resolution" value="2.84 A"/>
    <property type="chains" value="e=1-106"/>
</dbReference>
<dbReference type="PDB" id="8OM1">
    <property type="method" value="EM"/>
    <property type="resolution" value="2.39 A"/>
    <property type="chains" value="e=1-106"/>
</dbReference>
<dbReference type="PDB" id="8PW5">
    <property type="method" value="EM"/>
    <property type="resolution" value="3.60 A"/>
    <property type="chains" value="e1=1-106"/>
</dbReference>
<dbReference type="PDB" id="8PW6">
    <property type="method" value="EM"/>
    <property type="resolution" value="3.30 A"/>
    <property type="chains" value="e1=1-106"/>
</dbReference>
<dbReference type="PDB" id="8PW7">
    <property type="method" value="EM"/>
    <property type="resolution" value="3.50 A"/>
    <property type="chains" value="e1=1-106"/>
</dbReference>
<dbReference type="PDB" id="8RGP">
    <property type="method" value="EM"/>
    <property type="resolution" value="3.00 A"/>
    <property type="chains" value="e=1-106"/>
</dbReference>
<dbReference type="PDB" id="8RGQ">
    <property type="method" value="EM"/>
    <property type="resolution" value="3.00 A"/>
    <property type="chains" value="e=1-106"/>
</dbReference>
<dbReference type="PDB" id="8RGR">
    <property type="method" value="EM"/>
    <property type="resolution" value="2.90 A"/>
    <property type="chains" value="e=1-106"/>
</dbReference>
<dbReference type="PDB" id="8RGT">
    <property type="method" value="EM"/>
    <property type="resolution" value="3.10 A"/>
    <property type="chains" value="e=1-106"/>
</dbReference>
<dbReference type="PDB" id="8UCA">
    <property type="method" value="EM"/>
    <property type="resolution" value="3.70 A"/>
    <property type="chains" value="S5/s5=1-106"/>
</dbReference>
<dbReference type="PDBsum" id="6G2J"/>
<dbReference type="PDBsum" id="6G72"/>
<dbReference type="PDBsum" id="6ZR2"/>
<dbReference type="PDBsum" id="6ZTQ"/>
<dbReference type="PDBsum" id="7AK5"/>
<dbReference type="PDBsum" id="7AK6"/>
<dbReference type="PDBsum" id="7B93"/>
<dbReference type="PDBsum" id="7PSA"/>
<dbReference type="PDBsum" id="8C2S"/>
<dbReference type="PDBsum" id="8CA3"/>
<dbReference type="PDBsum" id="8CA5"/>
<dbReference type="PDBsum" id="8IAO"/>
<dbReference type="PDBsum" id="8IAQ"/>
<dbReference type="PDBsum" id="8IB4"/>
<dbReference type="PDBsum" id="8IB6"/>
<dbReference type="PDBsum" id="8IB9"/>
<dbReference type="PDBsum" id="8IBB"/>
<dbReference type="PDBsum" id="8IBD"/>
<dbReference type="PDBsum" id="8IBF"/>
<dbReference type="PDBsum" id="8IC2"/>
<dbReference type="PDBsum" id="8IC4"/>
<dbReference type="PDBsum" id="8OLT"/>
<dbReference type="PDBsum" id="8OM1"/>
<dbReference type="PDBsum" id="8PW5"/>
<dbReference type="PDBsum" id="8PW6"/>
<dbReference type="PDBsum" id="8PW7"/>
<dbReference type="PDBsum" id="8RGP"/>
<dbReference type="PDBsum" id="8RGQ"/>
<dbReference type="PDBsum" id="8RGR"/>
<dbReference type="PDBsum" id="8RGT"/>
<dbReference type="PDBsum" id="8UCA"/>
<dbReference type="EMDB" id="EMD-11377"/>
<dbReference type="EMDB" id="EMD-11424"/>
<dbReference type="EMDB" id="EMD-11810"/>
<dbReference type="EMDB" id="EMD-11811"/>
<dbReference type="EMDB" id="EMD-12095"/>
<dbReference type="EMDB" id="EMD-13611"/>
<dbReference type="EMDB" id="EMD-16398"/>
<dbReference type="EMDB" id="EMD-16516"/>
<dbReference type="EMDB" id="EMD-16518"/>
<dbReference type="EMDB" id="EMD-16962"/>
<dbReference type="EMDB" id="EMD-16965"/>
<dbReference type="EMDB" id="EMD-17989"/>
<dbReference type="EMDB" id="EMD-17990"/>
<dbReference type="EMDB" id="EMD-17991"/>
<dbReference type="EMDB" id="EMD-19145"/>
<dbReference type="EMDB" id="EMD-19146"/>
<dbReference type="EMDB" id="EMD-19147"/>
<dbReference type="EMDB" id="EMD-19148"/>
<dbReference type="EMDB" id="EMD-35313"/>
<dbReference type="EMDB" id="EMD-35315"/>
<dbReference type="EMDB" id="EMD-35331"/>
<dbReference type="EMDB" id="EMD-35333"/>
<dbReference type="EMDB" id="EMD-35336"/>
<dbReference type="EMDB" id="EMD-35338"/>
<dbReference type="EMDB" id="EMD-35340"/>
<dbReference type="EMDB" id="EMD-35342"/>
<dbReference type="EMDB" id="EMD-35352"/>
<dbReference type="EMDB" id="EMD-35354"/>
<dbReference type="EMDB" id="EMD-42122"/>
<dbReference type="EMDB" id="EMD-4345"/>
<dbReference type="EMDB" id="EMD-4356"/>
<dbReference type="SMR" id="Q99LY9"/>
<dbReference type="BioGRID" id="546774">
    <property type="interactions" value="53"/>
</dbReference>
<dbReference type="ComplexPortal" id="CPX-266">
    <property type="entry name" value="Mitochondrial respiratory chain complex I"/>
</dbReference>
<dbReference type="CORUM" id="Q99LY9"/>
<dbReference type="FunCoup" id="Q99LY9">
    <property type="interactions" value="1629"/>
</dbReference>
<dbReference type="IntAct" id="Q99LY9">
    <property type="interactions" value="2"/>
</dbReference>
<dbReference type="STRING" id="10090.ENSMUSP00000101813"/>
<dbReference type="GlyGen" id="Q99LY9">
    <property type="glycosylation" value="1 site, 1 O-linked glycan (1 site)"/>
</dbReference>
<dbReference type="iPTMnet" id="Q99LY9"/>
<dbReference type="PhosphoSitePlus" id="Q99LY9"/>
<dbReference type="SwissPalm" id="Q99LY9"/>
<dbReference type="jPOST" id="Q99LY9"/>
<dbReference type="PaxDb" id="10090-ENSMUSP00000030401"/>
<dbReference type="PeptideAtlas" id="Q99LY9"/>
<dbReference type="ProteomicsDB" id="253049"/>
<dbReference type="Pumba" id="Q99LY9"/>
<dbReference type="Antibodypedia" id="31851">
    <property type="antibodies" value="220 antibodies from 31 providers"/>
</dbReference>
<dbReference type="DNASU" id="595136"/>
<dbReference type="Ensembl" id="ENSMUST00000030401.14">
    <property type="protein sequence ID" value="ENSMUSP00000030401.8"/>
    <property type="gene ID" value="ENSMUSG00000028648.14"/>
</dbReference>
<dbReference type="Ensembl" id="ENSMUST00000106206.8">
    <property type="protein sequence ID" value="ENSMUSP00000101812.2"/>
    <property type="gene ID" value="ENSMUSG00000028648.14"/>
</dbReference>
<dbReference type="Ensembl" id="ENSMUST00000106207.8">
    <property type="protein sequence ID" value="ENSMUSP00000101813.2"/>
    <property type="gene ID" value="ENSMUSG00000028648.14"/>
</dbReference>
<dbReference type="GeneID" id="595136"/>
<dbReference type="KEGG" id="mmu:595136"/>
<dbReference type="UCSC" id="uc008upu.1">
    <property type="organism name" value="mouse"/>
</dbReference>
<dbReference type="AGR" id="MGI:1890889"/>
<dbReference type="CTD" id="4725"/>
<dbReference type="MGI" id="MGI:1890889">
    <property type="gene designation" value="Ndufs5"/>
</dbReference>
<dbReference type="VEuPathDB" id="HostDB:ENSMUSG00000028648"/>
<dbReference type="eggNOG" id="KOG4110">
    <property type="taxonomic scope" value="Eukaryota"/>
</dbReference>
<dbReference type="GeneTree" id="ENSGT00390000002919"/>
<dbReference type="HOGENOM" id="CLU_176387_0_0_1"/>
<dbReference type="InParanoid" id="Q99LY9"/>
<dbReference type="OMA" id="RQQRDKM"/>
<dbReference type="OrthoDB" id="9992197at2759"/>
<dbReference type="PhylomeDB" id="Q99LY9"/>
<dbReference type="TreeFam" id="TF332111"/>
<dbReference type="Reactome" id="R-MMU-611105">
    <property type="pathway name" value="Respiratory electron transport"/>
</dbReference>
<dbReference type="Reactome" id="R-MMU-6799198">
    <property type="pathway name" value="Complex I biogenesis"/>
</dbReference>
<dbReference type="BioGRID-ORCS" id="595136">
    <property type="hits" value="21 hits in 77 CRISPR screens"/>
</dbReference>
<dbReference type="PRO" id="PR:Q99LY9"/>
<dbReference type="Proteomes" id="UP000000589">
    <property type="component" value="Chromosome 4"/>
</dbReference>
<dbReference type="RNAct" id="Q99LY9">
    <property type="molecule type" value="protein"/>
</dbReference>
<dbReference type="Bgee" id="ENSMUSG00000028648">
    <property type="expression patterns" value="Expressed in sternocleidomastoid and 265 other cell types or tissues"/>
</dbReference>
<dbReference type="ExpressionAtlas" id="Q99LY9">
    <property type="expression patterns" value="baseline and differential"/>
</dbReference>
<dbReference type="GO" id="GO:0005743">
    <property type="term" value="C:mitochondrial inner membrane"/>
    <property type="evidence" value="ECO:0000314"/>
    <property type="project" value="UniProtKB"/>
</dbReference>
<dbReference type="GO" id="GO:0005758">
    <property type="term" value="C:mitochondrial intermembrane space"/>
    <property type="evidence" value="ECO:0007669"/>
    <property type="project" value="UniProtKB-SubCell"/>
</dbReference>
<dbReference type="GO" id="GO:0005739">
    <property type="term" value="C:mitochondrion"/>
    <property type="evidence" value="ECO:0007005"/>
    <property type="project" value="MGI"/>
</dbReference>
<dbReference type="GO" id="GO:0045271">
    <property type="term" value="C:respiratory chain complex I"/>
    <property type="evidence" value="ECO:0000314"/>
    <property type="project" value="UniProtKB"/>
</dbReference>
<dbReference type="GO" id="GO:0009060">
    <property type="term" value="P:aerobic respiration"/>
    <property type="evidence" value="ECO:0000303"/>
    <property type="project" value="ComplexPortal"/>
</dbReference>
<dbReference type="GO" id="GO:0032981">
    <property type="term" value="P:mitochondrial respiratory chain complex I assembly"/>
    <property type="evidence" value="ECO:0007669"/>
    <property type="project" value="Ensembl"/>
</dbReference>
<dbReference type="GO" id="GO:0042776">
    <property type="term" value="P:proton motive force-driven mitochondrial ATP synthesis"/>
    <property type="evidence" value="ECO:0000303"/>
    <property type="project" value="ComplexPortal"/>
</dbReference>
<dbReference type="CDD" id="cd24141">
    <property type="entry name" value="NDUFS5-like"/>
    <property type="match status" value="1"/>
</dbReference>
<dbReference type="InterPro" id="IPR019342">
    <property type="entry name" value="NADH_UbQ_OxRdtase_FeS-su5"/>
</dbReference>
<dbReference type="PANTHER" id="PTHR15224">
    <property type="entry name" value="NADH DEHYDROGENASE [UBIQUINONE] IRON-SULFUR PROTEIN 5"/>
    <property type="match status" value="1"/>
</dbReference>
<dbReference type="PANTHER" id="PTHR15224:SF1">
    <property type="entry name" value="NADH DEHYDROGENASE [UBIQUINONE] IRON-SULFUR PROTEIN 5"/>
    <property type="match status" value="1"/>
</dbReference>
<dbReference type="Pfam" id="PF10200">
    <property type="entry name" value="Ndufs5"/>
    <property type="match status" value="1"/>
</dbReference>
<dbReference type="PROSITE" id="PS51808">
    <property type="entry name" value="CHCH"/>
    <property type="match status" value="1"/>
</dbReference>
<evidence type="ECO:0000250" key="1">
    <source>
        <dbReference type="UniProtKB" id="O43920"/>
    </source>
</evidence>
<evidence type="ECO:0000255" key="2">
    <source>
        <dbReference type="PROSITE-ProRule" id="PRU01150"/>
    </source>
</evidence>
<evidence type="ECO:0000256" key="3">
    <source>
        <dbReference type="SAM" id="MobiDB-lite"/>
    </source>
</evidence>
<evidence type="ECO:0000269" key="4">
    <source>
    </source>
</evidence>
<evidence type="ECO:0000305" key="5"/>
<evidence type="ECO:0007744" key="6">
    <source>
        <dbReference type="PDB" id="8PW5"/>
    </source>
</evidence>
<evidence type="ECO:0007829" key="7">
    <source>
        <dbReference type="PDB" id="8OM1"/>
    </source>
</evidence>
<evidence type="ECO:0007829" key="8">
    <source>
        <dbReference type="PDB" id="8RGR"/>
    </source>
</evidence>
<feature type="chain" id="PRO_0000118787" description="NADH dehydrogenase [ubiquinone] iron-sulfur protein 5">
    <location>
        <begin position="1"/>
        <end position="106"/>
    </location>
</feature>
<feature type="domain" description="CHCH" evidence="2">
    <location>
        <begin position="30"/>
        <end position="74"/>
    </location>
</feature>
<feature type="region of interest" description="Disordered" evidence="3">
    <location>
        <begin position="79"/>
        <end position="106"/>
    </location>
</feature>
<feature type="short sequence motif" description="Cx9C motif 1" evidence="2">
    <location>
        <begin position="33"/>
        <end position="43"/>
    </location>
</feature>
<feature type="short sequence motif" description="Cx9C motif 2" evidence="2">
    <location>
        <begin position="56"/>
        <end position="66"/>
    </location>
</feature>
<feature type="compositionally biased region" description="Basic and acidic residues" evidence="3">
    <location>
        <begin position="79"/>
        <end position="91"/>
    </location>
</feature>
<feature type="disulfide bond" evidence="2">
    <location>
        <begin position="33"/>
        <end position="66"/>
    </location>
</feature>
<feature type="disulfide bond" evidence="2">
    <location>
        <begin position="43"/>
        <end position="56"/>
    </location>
</feature>
<feature type="helix" evidence="7">
    <location>
        <begin position="6"/>
        <end position="10"/>
    </location>
</feature>
<feature type="strand" evidence="7">
    <location>
        <begin position="14"/>
        <end position="16"/>
    </location>
</feature>
<feature type="strand" evidence="8">
    <location>
        <begin position="18"/>
        <end position="20"/>
    </location>
</feature>
<feature type="helix" evidence="7">
    <location>
        <begin position="26"/>
        <end position="28"/>
    </location>
</feature>
<feature type="helix" evidence="7">
    <location>
        <begin position="34"/>
        <end position="44"/>
    </location>
</feature>
<feature type="turn" evidence="7">
    <location>
        <begin position="45"/>
        <end position="47"/>
    </location>
</feature>
<feature type="helix" evidence="7">
    <location>
        <begin position="49"/>
        <end position="55"/>
    </location>
</feature>
<feature type="helix" evidence="7">
    <location>
        <begin position="57"/>
        <end position="68"/>
    </location>
</feature>
<feature type="helix" evidence="7">
    <location>
        <begin position="70"/>
        <end position="88"/>
    </location>
</feature>
<feature type="helix" evidence="7">
    <location>
        <begin position="96"/>
        <end position="98"/>
    </location>
</feature>